<protein>
    <recommendedName>
        <fullName evidence="1">Quinolinate synthase</fullName>
        <ecNumber evidence="1">2.5.1.72</ecNumber>
    </recommendedName>
</protein>
<dbReference type="EC" id="2.5.1.72" evidence="1"/>
<dbReference type="EMBL" id="CP001233">
    <property type="protein sequence ID" value="ACP06062.1"/>
    <property type="molecule type" value="Genomic_DNA"/>
</dbReference>
<dbReference type="RefSeq" id="WP_000018291.1">
    <property type="nucleotide sequence ID" value="NC_012578.1"/>
</dbReference>
<dbReference type="SMR" id="C3LND6"/>
<dbReference type="KEGG" id="vcm:VCM66_1756"/>
<dbReference type="HOGENOM" id="CLU_047382_1_0_6"/>
<dbReference type="UniPathway" id="UPA00253">
    <property type="reaction ID" value="UER00327"/>
</dbReference>
<dbReference type="Proteomes" id="UP000001217">
    <property type="component" value="Chromosome I"/>
</dbReference>
<dbReference type="GO" id="GO:0005829">
    <property type="term" value="C:cytosol"/>
    <property type="evidence" value="ECO:0007669"/>
    <property type="project" value="TreeGrafter"/>
</dbReference>
<dbReference type="GO" id="GO:0051539">
    <property type="term" value="F:4 iron, 4 sulfur cluster binding"/>
    <property type="evidence" value="ECO:0007669"/>
    <property type="project" value="UniProtKB-KW"/>
</dbReference>
<dbReference type="GO" id="GO:0046872">
    <property type="term" value="F:metal ion binding"/>
    <property type="evidence" value="ECO:0007669"/>
    <property type="project" value="UniProtKB-KW"/>
</dbReference>
<dbReference type="GO" id="GO:0008987">
    <property type="term" value="F:quinolinate synthetase A activity"/>
    <property type="evidence" value="ECO:0007669"/>
    <property type="project" value="UniProtKB-UniRule"/>
</dbReference>
<dbReference type="GO" id="GO:0034628">
    <property type="term" value="P:'de novo' NAD biosynthetic process from L-aspartate"/>
    <property type="evidence" value="ECO:0007669"/>
    <property type="project" value="TreeGrafter"/>
</dbReference>
<dbReference type="FunFam" id="3.40.50.10800:FF:000001">
    <property type="entry name" value="Quinolinate synthase A"/>
    <property type="match status" value="1"/>
</dbReference>
<dbReference type="FunFam" id="3.40.50.10800:FF:000003">
    <property type="entry name" value="Quinolinate synthase A"/>
    <property type="match status" value="1"/>
</dbReference>
<dbReference type="Gene3D" id="3.40.50.10800">
    <property type="entry name" value="NadA-like"/>
    <property type="match status" value="3"/>
</dbReference>
<dbReference type="HAMAP" id="MF_00567">
    <property type="entry name" value="NadA_type1"/>
    <property type="match status" value="1"/>
</dbReference>
<dbReference type="InterPro" id="IPR003473">
    <property type="entry name" value="NadA"/>
</dbReference>
<dbReference type="InterPro" id="IPR036094">
    <property type="entry name" value="NadA_sf"/>
</dbReference>
<dbReference type="InterPro" id="IPR023513">
    <property type="entry name" value="Quinolinate_synth_A_type1"/>
</dbReference>
<dbReference type="NCBIfam" id="TIGR00550">
    <property type="entry name" value="nadA"/>
    <property type="match status" value="1"/>
</dbReference>
<dbReference type="NCBIfam" id="NF006877">
    <property type="entry name" value="PRK09375.1-1"/>
    <property type="match status" value="1"/>
</dbReference>
<dbReference type="NCBIfam" id="NF006878">
    <property type="entry name" value="PRK09375.1-2"/>
    <property type="match status" value="1"/>
</dbReference>
<dbReference type="PANTHER" id="PTHR30573:SF0">
    <property type="entry name" value="QUINOLINATE SYNTHASE, CHLOROPLASTIC"/>
    <property type="match status" value="1"/>
</dbReference>
<dbReference type="PANTHER" id="PTHR30573">
    <property type="entry name" value="QUINOLINATE SYNTHETASE A"/>
    <property type="match status" value="1"/>
</dbReference>
<dbReference type="Pfam" id="PF02445">
    <property type="entry name" value="NadA"/>
    <property type="match status" value="1"/>
</dbReference>
<dbReference type="SUPFAM" id="SSF142754">
    <property type="entry name" value="NadA-like"/>
    <property type="match status" value="1"/>
</dbReference>
<reference key="1">
    <citation type="journal article" date="2008" name="PLoS ONE">
        <title>A recalibrated molecular clock and independent origins for the cholera pandemic clones.</title>
        <authorList>
            <person name="Feng L."/>
            <person name="Reeves P.R."/>
            <person name="Lan R."/>
            <person name="Ren Y."/>
            <person name="Gao C."/>
            <person name="Zhou Z."/>
            <person name="Ren Y."/>
            <person name="Cheng J."/>
            <person name="Wang W."/>
            <person name="Wang J."/>
            <person name="Qian W."/>
            <person name="Li D."/>
            <person name="Wang L."/>
        </authorList>
    </citation>
    <scope>NUCLEOTIDE SEQUENCE [LARGE SCALE GENOMIC DNA]</scope>
    <source>
        <strain>M66-2</strain>
    </source>
</reference>
<proteinExistence type="inferred from homology"/>
<sequence length="353" mass="38609">MSHILDTINTVYPFPPKPIPLRDEEKQAYIAEIKQLLIEKDAVLIAHYYTDPEIQALAESTGGFVGDSLEMAKFGNRYPATTLIIAGVRFMGESAKILTPEKRILMPTLEAECSLDLGCPADKFTEFCDAHPDHTVVVYANTSAAVKARADWVVTSSIALEIVEHLDSEGKPIIWGPDRHLGAYIAKKTGADMLLWQGECVVHDEFSADALRKMKALYPDAAILVHPESPASVVELADAVGSTSQLIKAAKTLPQQKMIVATDKGIFFKMQQMVPEKELIEAPTAGAGATCRSCAHCPWMAMNGLQAIAQALREGGKQHEIFVDEALRVKSLIPLNRMLDFAEQLNLKVKGNA</sequence>
<accession>C3LND6</accession>
<organism>
    <name type="scientific">Vibrio cholerae serotype O1 (strain M66-2)</name>
    <dbReference type="NCBI Taxonomy" id="579112"/>
    <lineage>
        <taxon>Bacteria</taxon>
        <taxon>Pseudomonadati</taxon>
        <taxon>Pseudomonadota</taxon>
        <taxon>Gammaproteobacteria</taxon>
        <taxon>Vibrionales</taxon>
        <taxon>Vibrionaceae</taxon>
        <taxon>Vibrio</taxon>
    </lineage>
</organism>
<name>NADA_VIBCM</name>
<feature type="chain" id="PRO_1000146807" description="Quinolinate synthase">
    <location>
        <begin position="1"/>
        <end position="353"/>
    </location>
</feature>
<feature type="binding site" evidence="1">
    <location>
        <position position="47"/>
    </location>
    <ligand>
        <name>iminosuccinate</name>
        <dbReference type="ChEBI" id="CHEBI:77875"/>
    </ligand>
</feature>
<feature type="binding site" evidence="1">
    <location>
        <position position="68"/>
    </location>
    <ligand>
        <name>iminosuccinate</name>
        <dbReference type="ChEBI" id="CHEBI:77875"/>
    </ligand>
</feature>
<feature type="binding site" evidence="1">
    <location>
        <position position="113"/>
    </location>
    <ligand>
        <name>[4Fe-4S] cluster</name>
        <dbReference type="ChEBI" id="CHEBI:49883"/>
    </ligand>
</feature>
<feature type="binding site" evidence="1">
    <location>
        <begin position="139"/>
        <end position="141"/>
    </location>
    <ligand>
        <name>iminosuccinate</name>
        <dbReference type="ChEBI" id="CHEBI:77875"/>
    </ligand>
</feature>
<feature type="binding site" evidence="1">
    <location>
        <position position="156"/>
    </location>
    <ligand>
        <name>iminosuccinate</name>
        <dbReference type="ChEBI" id="CHEBI:77875"/>
    </ligand>
</feature>
<feature type="binding site" evidence="1">
    <location>
        <position position="200"/>
    </location>
    <ligand>
        <name>[4Fe-4S] cluster</name>
        <dbReference type="ChEBI" id="CHEBI:49883"/>
    </ligand>
</feature>
<feature type="binding site" evidence="1">
    <location>
        <begin position="226"/>
        <end position="228"/>
    </location>
    <ligand>
        <name>iminosuccinate</name>
        <dbReference type="ChEBI" id="CHEBI:77875"/>
    </ligand>
</feature>
<feature type="binding site" evidence="1">
    <location>
        <position position="243"/>
    </location>
    <ligand>
        <name>iminosuccinate</name>
        <dbReference type="ChEBI" id="CHEBI:77875"/>
    </ligand>
</feature>
<feature type="binding site" evidence="1">
    <location>
        <position position="297"/>
    </location>
    <ligand>
        <name>[4Fe-4S] cluster</name>
        <dbReference type="ChEBI" id="CHEBI:49883"/>
    </ligand>
</feature>
<comment type="function">
    <text evidence="1">Catalyzes the condensation of iminoaspartate with dihydroxyacetone phosphate to form quinolinate.</text>
</comment>
<comment type="catalytic activity">
    <reaction evidence="1">
        <text>iminosuccinate + dihydroxyacetone phosphate = quinolinate + phosphate + 2 H2O + H(+)</text>
        <dbReference type="Rhea" id="RHEA:25888"/>
        <dbReference type="ChEBI" id="CHEBI:15377"/>
        <dbReference type="ChEBI" id="CHEBI:15378"/>
        <dbReference type="ChEBI" id="CHEBI:29959"/>
        <dbReference type="ChEBI" id="CHEBI:43474"/>
        <dbReference type="ChEBI" id="CHEBI:57642"/>
        <dbReference type="ChEBI" id="CHEBI:77875"/>
        <dbReference type="EC" id="2.5.1.72"/>
    </reaction>
    <physiologicalReaction direction="left-to-right" evidence="1">
        <dbReference type="Rhea" id="RHEA:25889"/>
    </physiologicalReaction>
</comment>
<comment type="cofactor">
    <cofactor evidence="1">
        <name>[4Fe-4S] cluster</name>
        <dbReference type="ChEBI" id="CHEBI:49883"/>
    </cofactor>
    <text evidence="1">Binds 1 [4Fe-4S] cluster per subunit.</text>
</comment>
<comment type="pathway">
    <text evidence="1">Cofactor biosynthesis; NAD(+) biosynthesis; quinolinate from iminoaspartate: step 1/1.</text>
</comment>
<comment type="subcellular location">
    <subcellularLocation>
        <location evidence="1">Cytoplasm</location>
    </subcellularLocation>
</comment>
<comment type="similarity">
    <text evidence="1">Belongs to the quinolinate synthase family. Type 1 subfamily.</text>
</comment>
<evidence type="ECO:0000255" key="1">
    <source>
        <dbReference type="HAMAP-Rule" id="MF_00567"/>
    </source>
</evidence>
<keyword id="KW-0004">4Fe-4S</keyword>
<keyword id="KW-0963">Cytoplasm</keyword>
<keyword id="KW-0408">Iron</keyword>
<keyword id="KW-0411">Iron-sulfur</keyword>
<keyword id="KW-0479">Metal-binding</keyword>
<keyword id="KW-0662">Pyridine nucleotide biosynthesis</keyword>
<keyword id="KW-0808">Transferase</keyword>
<gene>
    <name evidence="1" type="primary">nadA</name>
    <name type="ordered locus">VCM66_1756</name>
</gene>